<keyword id="KW-0058">Aromatic hydrocarbons catabolism</keyword>
<keyword id="KW-0274">FAD</keyword>
<keyword id="KW-0285">Flavoprotein</keyword>
<keyword id="KW-0520">NAD</keyword>
<keyword id="KW-0560">Oxidoreductase</keyword>
<keyword id="KW-1185">Reference proteome</keyword>
<feature type="chain" id="PRO_0000167661" description="3-phenylpropionate/cinnamic acid dioxygenase ferredoxin--NAD(+) reductase component">
    <location>
        <begin position="1"/>
        <end position="400"/>
    </location>
</feature>
<feature type="binding site" evidence="1">
    <location>
        <begin position="5"/>
        <end position="36"/>
    </location>
    <ligand>
        <name>FAD</name>
        <dbReference type="ChEBI" id="CHEBI:57692"/>
    </ligand>
</feature>
<feature type="binding site" evidence="1">
    <location>
        <begin position="146"/>
        <end position="174"/>
    </location>
    <ligand>
        <name>NAD(+)</name>
        <dbReference type="ChEBI" id="CHEBI:57540"/>
    </ligand>
</feature>
<proteinExistence type="evidence at protein level"/>
<sequence length="400" mass="43978">MKEKTIIIVGGGQAAAMAAASLRQQGFTGELHLFSDERHLPYERPPLSKSMLLEDSPQLQQVLPANWWQENNVHLHSGVTIKTLGRDTRELVLTNGESWHWDQLFIATGAAARPLPLLDALGERCFTLRHAGDAARLREVLQPERSVVIIGAGTIGLELAASATQRRCKVTVIELAATVMGRNAPPPVQRYLLQRHQQAGVRILLNNAIEHVVDGEKVELTLQSGETLQADVVIYGIGISANEQLAREANLDTANGIVIDEACRTCDPAIFAGGDVAITRLDNGALHRCESWENANNQAQIAAAAMLGLPLPLLPPPWFWSDQYSDNLQFIGDMRGDDWLCRGNPETQKAIWFNLQNGVLIGAVTLNQGREIRPIRKWIQSGKTFDAKLLIDENIALKSL</sequence>
<gene>
    <name type="primary">hcaD</name>
    <name type="synonym">hcaA4</name>
    <name type="synonym">phdA</name>
    <name type="synonym">yfhY</name>
    <name type="ordered locus">b2542</name>
    <name type="ordered locus">JW2526</name>
</gene>
<organism>
    <name type="scientific">Escherichia coli (strain K12)</name>
    <dbReference type="NCBI Taxonomy" id="83333"/>
    <lineage>
        <taxon>Bacteria</taxon>
        <taxon>Pseudomonadati</taxon>
        <taxon>Pseudomonadota</taxon>
        <taxon>Gammaproteobacteria</taxon>
        <taxon>Enterobacterales</taxon>
        <taxon>Enterobacteriaceae</taxon>
        <taxon>Escherichia</taxon>
    </lineage>
</organism>
<evidence type="ECO:0000255" key="1"/>
<evidence type="ECO:0000305" key="2"/>
<name>HCAD_ECOLI</name>
<reference key="1">
    <citation type="journal article" date="1998" name="J. Bacteriol.">
        <title>Characterization of the hca cluster encoding the dioxygenolytic pathway for initial catabolism of 3-phenylpropionic acid in Escherichia coli K-12.</title>
        <authorList>
            <person name="Diaz E."/>
            <person name="Ferrandez A."/>
            <person name="Garcia J.L."/>
        </authorList>
    </citation>
    <scope>NUCLEOTIDE SEQUENCE [GENOMIC DNA]</scope>
    <scope>CHARACTERIZATION</scope>
    <source>
        <strain>K12 / MC1061 / ATCC 53338 / DSM 7140</strain>
    </source>
</reference>
<reference key="2">
    <citation type="journal article" date="1997" name="DNA Res.">
        <title>Construction of a contiguous 874-kb sequence of the Escherichia coli-K12 genome corresponding to 50.0-68.8 min on the linkage map and analysis of its sequence features.</title>
        <authorList>
            <person name="Yamamoto Y."/>
            <person name="Aiba H."/>
            <person name="Baba T."/>
            <person name="Hayashi K."/>
            <person name="Inada T."/>
            <person name="Isono K."/>
            <person name="Itoh T."/>
            <person name="Kimura S."/>
            <person name="Kitagawa M."/>
            <person name="Makino K."/>
            <person name="Miki T."/>
            <person name="Mitsuhashi N."/>
            <person name="Mizobuchi K."/>
            <person name="Mori H."/>
            <person name="Nakade S."/>
            <person name="Nakamura Y."/>
            <person name="Nashimoto H."/>
            <person name="Oshima T."/>
            <person name="Oyama S."/>
            <person name="Saito N."/>
            <person name="Sampei G."/>
            <person name="Satoh Y."/>
            <person name="Sivasundaram S."/>
            <person name="Tagami H."/>
            <person name="Takahashi H."/>
            <person name="Takeda J."/>
            <person name="Takemoto K."/>
            <person name="Uehara K."/>
            <person name="Wada C."/>
            <person name="Yamagata S."/>
            <person name="Horiuchi T."/>
        </authorList>
    </citation>
    <scope>NUCLEOTIDE SEQUENCE [LARGE SCALE GENOMIC DNA]</scope>
    <source>
        <strain>K12 / W3110 / ATCC 27325 / DSM 5911</strain>
    </source>
</reference>
<reference key="3">
    <citation type="journal article" date="1997" name="Science">
        <title>The complete genome sequence of Escherichia coli K-12.</title>
        <authorList>
            <person name="Blattner F.R."/>
            <person name="Plunkett G. III"/>
            <person name="Bloch C.A."/>
            <person name="Perna N.T."/>
            <person name="Burland V."/>
            <person name="Riley M."/>
            <person name="Collado-Vides J."/>
            <person name="Glasner J.D."/>
            <person name="Rode C.K."/>
            <person name="Mayhew G.F."/>
            <person name="Gregor J."/>
            <person name="Davis N.W."/>
            <person name="Kirkpatrick H.A."/>
            <person name="Goeden M.A."/>
            <person name="Rose D.J."/>
            <person name="Mau B."/>
            <person name="Shao Y."/>
        </authorList>
    </citation>
    <scope>NUCLEOTIDE SEQUENCE [LARGE SCALE GENOMIC DNA]</scope>
    <source>
        <strain>K12 / MG1655 / ATCC 47076</strain>
    </source>
</reference>
<reference key="4">
    <citation type="journal article" date="2006" name="Mol. Syst. Biol.">
        <title>Highly accurate genome sequences of Escherichia coli K-12 strains MG1655 and W3110.</title>
        <authorList>
            <person name="Hayashi K."/>
            <person name="Morooka N."/>
            <person name="Yamamoto Y."/>
            <person name="Fujita K."/>
            <person name="Isono K."/>
            <person name="Choi S."/>
            <person name="Ohtsubo E."/>
            <person name="Baba T."/>
            <person name="Wanner B.L."/>
            <person name="Mori H."/>
            <person name="Horiuchi T."/>
        </authorList>
    </citation>
    <scope>NUCLEOTIDE SEQUENCE [LARGE SCALE GENOMIC DNA]</scope>
    <source>
        <strain>K12 / W3110 / ATCC 27325 / DSM 5911</strain>
    </source>
</reference>
<comment type="function">
    <text>Part of the multicomponent 3-phenylpropionate dioxygenase, that converts 3-phenylpropionic acid (PP) and cinnamic acid (CI) into 3-phenylpropionate-dihydrodiol (PP-dihydrodiol) and cinnamic acid-dihydrodiol (CI-dihydrodiol), respectively.</text>
</comment>
<comment type="catalytic activity">
    <reaction>
        <text>2 reduced [2Fe-2S]-[ferredoxin] + NAD(+) + H(+) = 2 oxidized [2Fe-2S]-[ferredoxin] + NADH</text>
        <dbReference type="Rhea" id="RHEA:16521"/>
        <dbReference type="Rhea" id="RHEA-COMP:10000"/>
        <dbReference type="Rhea" id="RHEA-COMP:10001"/>
        <dbReference type="ChEBI" id="CHEBI:15378"/>
        <dbReference type="ChEBI" id="CHEBI:33737"/>
        <dbReference type="ChEBI" id="CHEBI:33738"/>
        <dbReference type="ChEBI" id="CHEBI:57540"/>
        <dbReference type="ChEBI" id="CHEBI:57945"/>
        <dbReference type="EC" id="1.18.1.3"/>
    </reaction>
</comment>
<comment type="cofactor">
    <cofactor>
        <name>FAD</name>
        <dbReference type="ChEBI" id="CHEBI:57692"/>
    </cofactor>
</comment>
<comment type="pathway">
    <text>Aromatic compound metabolism; 3-phenylpropanoate degradation.</text>
</comment>
<comment type="subunit">
    <text>This dioxygenase system consists of four proteins: the two subunits of the hydroxylase component (HcaE and HcaF), a ferredoxin (HcaC) and a ferredoxin reductase (HcaD).</text>
</comment>
<comment type="interaction">
    <interactant intactId="EBI-1129389">
        <id>P77650</id>
    </interactant>
    <interactant intactId="EBI-562488">
        <id>P0A6Z6</id>
        <label>nikR</label>
    </interactant>
    <organismsDiffer>false</organismsDiffer>
    <experiments>2</experiments>
</comment>
<comment type="similarity">
    <text evidence="2">Belongs to the bacterial ring-hydroxylating dioxygenase ferredoxin reductase family.</text>
</comment>
<accession>P77650</accession>
<accession>O08100</accession>
<protein>
    <recommendedName>
        <fullName>3-phenylpropionate/cinnamic acid dioxygenase ferredoxin--NAD(+) reductase component</fullName>
        <ecNumber>1.18.1.3</ecNumber>
    </recommendedName>
</protein>
<dbReference type="EC" id="1.18.1.3"/>
<dbReference type="EMBL" id="Y11070">
    <property type="protein sequence ID" value="CAA71952.1"/>
    <property type="molecule type" value="Genomic_DNA"/>
</dbReference>
<dbReference type="EMBL" id="U00096">
    <property type="protein sequence ID" value="AAC75595.1"/>
    <property type="molecule type" value="Genomic_DNA"/>
</dbReference>
<dbReference type="EMBL" id="AP009048">
    <property type="protein sequence ID" value="BAA16445.1"/>
    <property type="molecule type" value="Genomic_DNA"/>
</dbReference>
<dbReference type="PIR" id="E65031">
    <property type="entry name" value="E65031"/>
</dbReference>
<dbReference type="RefSeq" id="NP_417037.1">
    <property type="nucleotide sequence ID" value="NC_000913.3"/>
</dbReference>
<dbReference type="RefSeq" id="WP_000660788.1">
    <property type="nucleotide sequence ID" value="NZ_LN832404.1"/>
</dbReference>
<dbReference type="SMR" id="P77650"/>
<dbReference type="BioGRID" id="4259462">
    <property type="interactions" value="15"/>
</dbReference>
<dbReference type="BioGRID" id="849801">
    <property type="interactions" value="5"/>
</dbReference>
<dbReference type="ComplexPortal" id="CPX-5161">
    <property type="entry name" value="3-phenylpropionate/cinnamic acid dioxygenase"/>
</dbReference>
<dbReference type="FunCoup" id="P77650">
    <property type="interactions" value="443"/>
</dbReference>
<dbReference type="IntAct" id="P77650">
    <property type="interactions" value="7"/>
</dbReference>
<dbReference type="STRING" id="511145.b2542"/>
<dbReference type="PaxDb" id="511145-b2542"/>
<dbReference type="EnsemblBacteria" id="AAC75595">
    <property type="protein sequence ID" value="AAC75595"/>
    <property type="gene ID" value="b2542"/>
</dbReference>
<dbReference type="GeneID" id="945427"/>
<dbReference type="KEGG" id="ecj:JW2526"/>
<dbReference type="KEGG" id="eco:b2542"/>
<dbReference type="KEGG" id="ecoc:C3026_14080"/>
<dbReference type="PATRIC" id="fig|1411691.4.peg.4192"/>
<dbReference type="EchoBASE" id="EB3233"/>
<dbReference type="eggNOG" id="COG0446">
    <property type="taxonomic scope" value="Bacteria"/>
</dbReference>
<dbReference type="HOGENOM" id="CLU_003291_4_0_6"/>
<dbReference type="InParanoid" id="P77650"/>
<dbReference type="OMA" id="PRCTHYG"/>
<dbReference type="OrthoDB" id="9800167at2"/>
<dbReference type="PhylomeDB" id="P77650"/>
<dbReference type="BioCyc" id="EcoCyc:HCAD-MONOMER"/>
<dbReference type="BioCyc" id="MetaCyc:HCAD-MONOMER"/>
<dbReference type="UniPathway" id="UPA00714"/>
<dbReference type="PRO" id="PR:P77650"/>
<dbReference type="Proteomes" id="UP000000625">
    <property type="component" value="Chromosome"/>
</dbReference>
<dbReference type="GO" id="GO:0009334">
    <property type="term" value="C:3-phenylpropionate dioxygenase complex"/>
    <property type="evidence" value="ECO:0000303"/>
    <property type="project" value="ComplexPortal"/>
</dbReference>
<dbReference type="GO" id="GO:0005737">
    <property type="term" value="C:cytoplasm"/>
    <property type="evidence" value="ECO:0000318"/>
    <property type="project" value="GO_Central"/>
</dbReference>
<dbReference type="GO" id="GO:0008695">
    <property type="term" value="F:3-phenylpropionate dioxygenase activity"/>
    <property type="evidence" value="ECO:0007669"/>
    <property type="project" value="UniProtKB-UniRule"/>
</dbReference>
<dbReference type="GO" id="GO:0008860">
    <property type="term" value="F:ferredoxin-NAD+ reductase activity"/>
    <property type="evidence" value="ECO:0007669"/>
    <property type="project" value="UniProtKB-EC"/>
</dbReference>
<dbReference type="GO" id="GO:0016651">
    <property type="term" value="F:oxidoreductase activity, acting on NAD(P)H"/>
    <property type="evidence" value="ECO:0000318"/>
    <property type="project" value="GO_Central"/>
</dbReference>
<dbReference type="GO" id="GO:0019380">
    <property type="term" value="P:3-phenylpropionate catabolic process"/>
    <property type="evidence" value="ECO:0000315"/>
    <property type="project" value="EcoCyc"/>
</dbReference>
<dbReference type="FunFam" id="3.30.390.30:FF:000010">
    <property type="entry name" value="3-phenylpropionate/cinnamic acid dioxygenase ferredoxin--NAD(+) reductase component"/>
    <property type="match status" value="1"/>
</dbReference>
<dbReference type="FunFam" id="3.50.50.60:FF:000088">
    <property type="entry name" value="3-phenylpropionate/cinnamic acid dioxygenase ferredoxin--NAD(+) reductase component"/>
    <property type="match status" value="1"/>
</dbReference>
<dbReference type="Gene3D" id="3.30.390.30">
    <property type="match status" value="1"/>
</dbReference>
<dbReference type="Gene3D" id="3.50.50.60">
    <property type="entry name" value="FAD/NAD(P)-binding domain"/>
    <property type="match status" value="2"/>
</dbReference>
<dbReference type="HAMAP" id="MF_01651">
    <property type="entry name" value="HcaD"/>
    <property type="match status" value="1"/>
</dbReference>
<dbReference type="InterPro" id="IPR050446">
    <property type="entry name" value="FAD-oxidoreductase/Apoptosis"/>
</dbReference>
<dbReference type="InterPro" id="IPR036188">
    <property type="entry name" value="FAD/NAD-bd_sf"/>
</dbReference>
<dbReference type="InterPro" id="IPR023753">
    <property type="entry name" value="FAD/NAD-binding_dom"/>
</dbReference>
<dbReference type="InterPro" id="IPR016156">
    <property type="entry name" value="FAD/NAD-linked_Rdtase_dimer_sf"/>
</dbReference>
<dbReference type="InterPro" id="IPR023744">
    <property type="entry name" value="HcaD"/>
</dbReference>
<dbReference type="InterPro" id="IPR028202">
    <property type="entry name" value="Reductase_C"/>
</dbReference>
<dbReference type="InterPro" id="IPR053382">
    <property type="entry name" value="Ring-hydroxylating_dioxygenase"/>
</dbReference>
<dbReference type="NCBIfam" id="NF042949">
    <property type="entry name" value="3PPDioc_HcaD"/>
    <property type="match status" value="1"/>
</dbReference>
<dbReference type="NCBIfam" id="NF007286">
    <property type="entry name" value="PRK09754.1"/>
    <property type="match status" value="1"/>
</dbReference>
<dbReference type="PANTHER" id="PTHR43557">
    <property type="entry name" value="APOPTOSIS-INDUCING FACTOR 1"/>
    <property type="match status" value="1"/>
</dbReference>
<dbReference type="PANTHER" id="PTHR43557:SF2">
    <property type="entry name" value="RIESKE DOMAIN-CONTAINING PROTEIN-RELATED"/>
    <property type="match status" value="1"/>
</dbReference>
<dbReference type="Pfam" id="PF07992">
    <property type="entry name" value="Pyr_redox_2"/>
    <property type="match status" value="1"/>
</dbReference>
<dbReference type="Pfam" id="PF14759">
    <property type="entry name" value="Reductase_C"/>
    <property type="match status" value="1"/>
</dbReference>
<dbReference type="PRINTS" id="PR00368">
    <property type="entry name" value="FADPNR"/>
</dbReference>
<dbReference type="PRINTS" id="PR00411">
    <property type="entry name" value="PNDRDTASEI"/>
</dbReference>
<dbReference type="SUPFAM" id="SSF51905">
    <property type="entry name" value="FAD/NAD(P)-binding domain"/>
    <property type="match status" value="1"/>
</dbReference>
<dbReference type="SUPFAM" id="SSF55424">
    <property type="entry name" value="FAD/NAD-linked reductases, dimerisation (C-terminal) domain"/>
    <property type="match status" value="1"/>
</dbReference>